<keyword id="KW-0175">Coiled coil</keyword>
<keyword id="KW-1035">Host cytoplasm</keyword>
<keyword id="KW-1185">Reference proteome</keyword>
<keyword id="KW-0813">Transport</keyword>
<keyword id="KW-0916">Viral movement protein</keyword>
<organismHost>
    <name type="scientific">Hordeum vulgare</name>
    <name type="common">Barley</name>
    <dbReference type="NCBI Taxonomy" id="4513"/>
</organismHost>
<organismHost>
    <name type="scientific">Triticum</name>
    <dbReference type="NCBI Taxonomy" id="4564"/>
</organismHost>
<name>MVP_SBWMN</name>
<feature type="chain" id="PRO_0000409448" description="Movement protein">
    <location>
        <begin position="1"/>
        <end position="327"/>
    </location>
</feature>
<feature type="region of interest" description="Disordered" evidence="2">
    <location>
        <begin position="271"/>
        <end position="294"/>
    </location>
</feature>
<feature type="region of interest" description="Disordered" evidence="2">
    <location>
        <begin position="307"/>
        <end position="327"/>
    </location>
</feature>
<feature type="coiled-coil region" evidence="1">
    <location>
        <begin position="252"/>
        <end position="311"/>
    </location>
</feature>
<feature type="compositionally biased region" description="Polar residues" evidence="2">
    <location>
        <begin position="313"/>
        <end position="327"/>
    </location>
</feature>
<protein>
    <recommendedName>
        <fullName>Movement protein</fullName>
    </recommendedName>
    <alternativeName>
        <fullName>37 kDa protein</fullName>
    </alternativeName>
    <alternativeName>
        <fullName>Cell-to-cell transport protein</fullName>
    </alternativeName>
</protein>
<reference key="1">
    <citation type="journal article" date="1993" name="Virology">
        <title>Complete nucleotide sequence and organization of the bipartite RNA genome of soil-borne wheat mosaic virus.</title>
        <authorList>
            <person name="Shirako Y."/>
            <person name="Wilson T.M."/>
        </authorList>
    </citation>
    <scope>NUCLEOTIDE SEQUENCE [GENOMIC RNA]</scope>
</reference>
<reference key="2">
    <citation type="journal article" date="2003" name="J. Gen. Virol.">
        <title>Evidence that the 37 kDa protein of Soil-borne wheat mosaic virus is a virus movement protein.</title>
        <authorList>
            <person name="An H."/>
            <person name="Melcher U."/>
            <person name="Doss P."/>
            <person name="Payton M."/>
            <person name="Guenzi A.C."/>
            <person name="Verchot-Lubicz J."/>
        </authorList>
    </citation>
    <scope>FUNCTION</scope>
    <scope>SUBCELLULAR LOCATION</scope>
</reference>
<dbReference type="EMBL" id="L07937">
    <property type="protein sequence ID" value="AAA48493.1"/>
    <property type="molecule type" value="Genomic_RNA"/>
</dbReference>
<dbReference type="RefSeq" id="NP_049337.1">
    <property type="nucleotide sequence ID" value="NC_002041.1"/>
</dbReference>
<dbReference type="SMR" id="Q06360"/>
<dbReference type="GeneID" id="991049"/>
<dbReference type="KEGG" id="vg:991049"/>
<dbReference type="Proteomes" id="UP000009270">
    <property type="component" value="Genome"/>
</dbReference>
<dbReference type="GO" id="GO:0030430">
    <property type="term" value="C:host cell cytoplasm"/>
    <property type="evidence" value="ECO:0007669"/>
    <property type="project" value="UniProtKB-SubCell"/>
</dbReference>
<dbReference type="GO" id="GO:0044158">
    <property type="term" value="C:host cell wall"/>
    <property type="evidence" value="ECO:0007669"/>
    <property type="project" value="UniProtKB-SubCell"/>
</dbReference>
<dbReference type="GO" id="GO:0046740">
    <property type="term" value="P:transport of virus in host, cell to cell"/>
    <property type="evidence" value="ECO:0007669"/>
    <property type="project" value="UniProtKB-KW"/>
</dbReference>
<dbReference type="InterPro" id="IPR000603">
    <property type="entry name" value="MPV"/>
</dbReference>
<dbReference type="Pfam" id="PF00803">
    <property type="entry name" value="3A"/>
    <property type="match status" value="1"/>
</dbReference>
<accession>Q06360</accession>
<evidence type="ECO:0000255" key="1"/>
<evidence type="ECO:0000256" key="2">
    <source>
        <dbReference type="SAM" id="MobiDB-lite"/>
    </source>
</evidence>
<evidence type="ECO:0000269" key="3">
    <source>
    </source>
</evidence>
<proteinExistence type="predicted"/>
<sequence length="327" mass="37150">MGSQDVKGDSYESVYNKILDMQSEPGGANDLRTNRQRSFNIENRYVEKALTQPGVVTKMQDAWTNWTKTNKEEGTPYNMSYSCVLLNVIPTVPMGYAGTVEVSLLDSGLSPLENVIPDQTQMMELGKGPHVMCFFMHYSIPLNDKGRAVKLAFKIDAEMASKGMSVMNVYSYWTQRQGHLSAYSEPQRSTISKLMLGYDKSLKMKTRNDVRRFVGRSLSLHNQEQSVPALLPGQINVMKENVPLYRKESVIDLTREEREKAAQLEMLRKTREVHTQRSAEEMKRRQAELAKDTQRKLAEEAKAVTEKRKNMAGVNSSNIKFGNFDSV</sequence>
<organism>
    <name type="scientific">Soil-borne wheat mosaic virus (strain United States/Nebraska/1981)</name>
    <name type="common">SBWMV</name>
    <dbReference type="NCBI Taxonomy" id="652673"/>
    <lineage>
        <taxon>Viruses</taxon>
        <taxon>Riboviria</taxon>
        <taxon>Orthornavirae</taxon>
        <taxon>Kitrinoviricota</taxon>
        <taxon>Alsuviricetes</taxon>
        <taxon>Martellivirales</taxon>
        <taxon>Virgaviridae</taxon>
        <taxon>Furovirus</taxon>
        <taxon>Soil-borne wheat mosaic virus</taxon>
    </lineage>
</organism>
<comment type="function">
    <text evidence="3">Transports viral genome to neighboring plant cells directly through plasmosdesmata, without any budding. The movement protein allows efficient cell to cell propagation, by bypassing the host cell wall barrier.</text>
</comment>
<comment type="subcellular location">
    <subcellularLocation>
        <location evidence="3">Host cell wall</location>
    </subcellularLocation>
    <subcellularLocation>
        <location evidence="3">Host cytoplasm</location>
    </subcellularLocation>
</comment>